<feature type="chain" id="PRO_0000101504" description="Ribosomal RNA small subunit methyltransferase A">
    <location>
        <begin position="1"/>
        <end position="277"/>
    </location>
</feature>
<feature type="binding site" evidence="1">
    <location>
        <position position="20"/>
    </location>
    <ligand>
        <name>S-adenosyl-L-methionine</name>
        <dbReference type="ChEBI" id="CHEBI:59789"/>
    </ligand>
</feature>
<feature type="binding site" evidence="1">
    <location>
        <position position="22"/>
    </location>
    <ligand>
        <name>S-adenosyl-L-methionine</name>
        <dbReference type="ChEBI" id="CHEBI:59789"/>
    </ligand>
</feature>
<feature type="binding site" evidence="1">
    <location>
        <position position="47"/>
    </location>
    <ligand>
        <name>S-adenosyl-L-methionine</name>
        <dbReference type="ChEBI" id="CHEBI:59789"/>
    </ligand>
</feature>
<feature type="binding site" evidence="1">
    <location>
        <position position="71"/>
    </location>
    <ligand>
        <name>S-adenosyl-L-methionine</name>
        <dbReference type="ChEBI" id="CHEBI:59789"/>
    </ligand>
</feature>
<feature type="binding site" evidence="1">
    <location>
        <position position="94"/>
    </location>
    <ligand>
        <name>S-adenosyl-L-methionine</name>
        <dbReference type="ChEBI" id="CHEBI:59789"/>
    </ligand>
</feature>
<feature type="binding site" evidence="1">
    <location>
        <position position="116"/>
    </location>
    <ligand>
        <name>S-adenosyl-L-methionine</name>
        <dbReference type="ChEBI" id="CHEBI:59789"/>
    </ligand>
</feature>
<sequence length="277" mass="30615">MILAKARIQGHTARKRFGQHFLIDSAVIDAIVSAIAPAPQDCLVEIGPGLGALTWPLLERLGGAGRLHAIEMDRDLAAHLQRLGHASLILHAGDALRFDFAQLARAEQARLRIVGNLPYNISSPLLFHLLDEMNEVVDQHFMLQREVAARIAAAPGSAHYGRLSVMLQSRYAVERLFDVPPCAFAPPPAVHSAVLRMAPHASRALPQLDWARFAALVRAAFSQRRKILRHTLSVYQKTPDFDALGFDHGRRAQEVPVGEYLKLAQHIEQNAHPNPKP</sequence>
<gene>
    <name evidence="1" type="primary">rsmA</name>
    <name evidence="1" type="synonym">ksgA</name>
</gene>
<accession>Q9RED9</accession>
<name>RSMA_BURSP</name>
<comment type="function">
    <text evidence="1">Specifically dimethylates two adjacent adenosines (A1518 and A1519) in the loop of a conserved hairpin near the 3'-end of 16S rRNA in the 30S particle. May play a critical role in biogenesis of 30S subunits.</text>
</comment>
<comment type="catalytic activity">
    <reaction evidence="1">
        <text>adenosine(1518)/adenosine(1519) in 16S rRNA + 4 S-adenosyl-L-methionine = N(6)-dimethyladenosine(1518)/N(6)-dimethyladenosine(1519) in 16S rRNA + 4 S-adenosyl-L-homocysteine + 4 H(+)</text>
        <dbReference type="Rhea" id="RHEA:19609"/>
        <dbReference type="Rhea" id="RHEA-COMP:10232"/>
        <dbReference type="Rhea" id="RHEA-COMP:10233"/>
        <dbReference type="ChEBI" id="CHEBI:15378"/>
        <dbReference type="ChEBI" id="CHEBI:57856"/>
        <dbReference type="ChEBI" id="CHEBI:59789"/>
        <dbReference type="ChEBI" id="CHEBI:74411"/>
        <dbReference type="ChEBI" id="CHEBI:74493"/>
        <dbReference type="EC" id="2.1.1.182"/>
    </reaction>
</comment>
<comment type="subcellular location">
    <subcellularLocation>
        <location evidence="1">Cytoplasm</location>
    </subcellularLocation>
</comment>
<comment type="similarity">
    <text evidence="1">Belongs to the class I-like SAM-binding methyltransferase superfamily. rRNA adenine N(6)-methyltransferase family. RsmA subfamily.</text>
</comment>
<keyword id="KW-0963">Cytoplasm</keyword>
<keyword id="KW-0489">Methyltransferase</keyword>
<keyword id="KW-0694">RNA-binding</keyword>
<keyword id="KW-0698">rRNA processing</keyword>
<keyword id="KW-0949">S-adenosyl-L-methionine</keyword>
<keyword id="KW-0808">Transferase</keyword>
<dbReference type="EC" id="2.1.1.182" evidence="1"/>
<dbReference type="EMBL" id="AJ242786">
    <property type="protein sequence ID" value="CAB64788.1"/>
    <property type="molecule type" value="Genomic_DNA"/>
</dbReference>
<dbReference type="SMR" id="Q9RED9"/>
<dbReference type="GO" id="GO:0005829">
    <property type="term" value="C:cytosol"/>
    <property type="evidence" value="ECO:0007669"/>
    <property type="project" value="TreeGrafter"/>
</dbReference>
<dbReference type="GO" id="GO:0052908">
    <property type="term" value="F:16S rRNA (adenine(1518)-N(6)/adenine(1519)-N(6))-dimethyltransferase activity"/>
    <property type="evidence" value="ECO:0007669"/>
    <property type="project" value="UniProtKB-EC"/>
</dbReference>
<dbReference type="GO" id="GO:0003723">
    <property type="term" value="F:RNA binding"/>
    <property type="evidence" value="ECO:0007669"/>
    <property type="project" value="UniProtKB-KW"/>
</dbReference>
<dbReference type="Gene3D" id="1.10.8.100">
    <property type="entry name" value="Ribosomal RNA adenine dimethylase-like, domain 2"/>
    <property type="match status" value="1"/>
</dbReference>
<dbReference type="Gene3D" id="3.40.50.150">
    <property type="entry name" value="Vaccinia Virus protein VP39"/>
    <property type="match status" value="1"/>
</dbReference>
<dbReference type="HAMAP" id="MF_00607">
    <property type="entry name" value="16SrRNA_methyltr_A"/>
    <property type="match status" value="1"/>
</dbReference>
<dbReference type="InterPro" id="IPR001737">
    <property type="entry name" value="KsgA/Erm"/>
</dbReference>
<dbReference type="InterPro" id="IPR023165">
    <property type="entry name" value="rRNA_Ade_diMease-like_C"/>
</dbReference>
<dbReference type="InterPro" id="IPR020596">
    <property type="entry name" value="rRNA_Ade_Mease_Trfase_CS"/>
</dbReference>
<dbReference type="InterPro" id="IPR020598">
    <property type="entry name" value="rRNA_Ade_methylase_Trfase_N"/>
</dbReference>
<dbReference type="InterPro" id="IPR011530">
    <property type="entry name" value="rRNA_adenine_dimethylase"/>
</dbReference>
<dbReference type="InterPro" id="IPR029063">
    <property type="entry name" value="SAM-dependent_MTases_sf"/>
</dbReference>
<dbReference type="NCBIfam" id="TIGR00755">
    <property type="entry name" value="ksgA"/>
    <property type="match status" value="1"/>
</dbReference>
<dbReference type="PANTHER" id="PTHR11727">
    <property type="entry name" value="DIMETHYLADENOSINE TRANSFERASE"/>
    <property type="match status" value="1"/>
</dbReference>
<dbReference type="PANTHER" id="PTHR11727:SF7">
    <property type="entry name" value="DIMETHYLADENOSINE TRANSFERASE-RELATED"/>
    <property type="match status" value="1"/>
</dbReference>
<dbReference type="Pfam" id="PF00398">
    <property type="entry name" value="RrnaAD"/>
    <property type="match status" value="1"/>
</dbReference>
<dbReference type="SMART" id="SM00650">
    <property type="entry name" value="rADc"/>
    <property type="match status" value="1"/>
</dbReference>
<dbReference type="SUPFAM" id="SSF53335">
    <property type="entry name" value="S-adenosyl-L-methionine-dependent methyltransferases"/>
    <property type="match status" value="1"/>
</dbReference>
<dbReference type="PROSITE" id="PS01131">
    <property type="entry name" value="RRNA_A_DIMETH"/>
    <property type="match status" value="1"/>
</dbReference>
<dbReference type="PROSITE" id="PS51689">
    <property type="entry name" value="SAM_RNA_A_N6_MT"/>
    <property type="match status" value="1"/>
</dbReference>
<evidence type="ECO:0000255" key="1">
    <source>
        <dbReference type="HAMAP-Rule" id="MF_00607"/>
    </source>
</evidence>
<proteinExistence type="inferred from homology"/>
<organism>
    <name type="scientific">Burkholderia sp</name>
    <dbReference type="NCBI Taxonomy" id="36773"/>
    <lineage>
        <taxon>Bacteria</taxon>
        <taxon>Pseudomonadati</taxon>
        <taxon>Pseudomonadota</taxon>
        <taxon>Betaproteobacteria</taxon>
        <taxon>Burkholderiales</taxon>
        <taxon>Burkholderiaceae</taxon>
        <taxon>Burkholderia</taxon>
    </lineage>
</organism>
<reference key="1">
    <citation type="submission" date="1999-05" db="EMBL/GenBank/DDBJ databases">
        <title>Intracellular Burkholderia of the arbuscular mycorrhizal fungus Gigaspora margarita possesses the vacB gene, which is involved in cellular adherence and spreading of bacteria.</title>
        <authorList>
            <person name="Juan Manuel R.L."/>
            <person name="Paola B."/>
        </authorList>
    </citation>
    <scope>NUCLEOTIDE SEQUENCE [GENOMIC DNA]</scope>
</reference>
<protein>
    <recommendedName>
        <fullName evidence="1">Ribosomal RNA small subunit methyltransferase A</fullName>
        <ecNumber evidence="1">2.1.1.182</ecNumber>
    </recommendedName>
    <alternativeName>
        <fullName evidence="1">16S rRNA (adenine(1518)-N(6)/adenine(1519)-N(6))-dimethyltransferase</fullName>
    </alternativeName>
    <alternativeName>
        <fullName evidence="1">16S rRNA dimethyladenosine transferase</fullName>
    </alternativeName>
    <alternativeName>
        <fullName evidence="1">16S rRNA dimethylase</fullName>
    </alternativeName>
    <alternativeName>
        <fullName evidence="1">S-adenosylmethionine-6-N', N'-adenosyl(rRNA) dimethyltransferase</fullName>
    </alternativeName>
</protein>